<reference key="1">
    <citation type="journal article" date="2007" name="Genes Dev.">
        <title>New insights into Acinetobacter baumannii pathogenesis revealed by high-density pyrosequencing and transposon mutagenesis.</title>
        <authorList>
            <person name="Smith M.G."/>
            <person name="Gianoulis T.A."/>
            <person name="Pukatzki S."/>
            <person name="Mekalanos J.J."/>
            <person name="Ornston L.N."/>
            <person name="Gerstein M."/>
            <person name="Snyder M."/>
        </authorList>
    </citation>
    <scope>NUCLEOTIDE SEQUENCE [LARGE SCALE GENOMIC DNA]</scope>
    <source>
        <strain>ATCC 17978 / DSM 105126 / CIP 53.77 / LMG 1025 / NCDC KC755 / 5377</strain>
    </source>
</reference>
<accession>A3M1X6</accession>
<comment type="function">
    <text evidence="1">Part of the twin-arginine translocation (Tat) system that transports large folded proteins containing a characteristic twin-arginine motif in their signal peptide across membranes. Together with TatC, TatB is part of a receptor directly interacting with Tat signal peptides. TatB may form an oligomeric binding site that transiently accommodates folded Tat precursor proteins before their translocation.</text>
</comment>
<comment type="subunit">
    <text evidence="1">The Tat system comprises two distinct complexes: a TatABC complex, containing multiple copies of TatA, TatB and TatC subunits, and a separate TatA complex, containing only TatA subunits. Substrates initially bind to the TatABC complex, which probably triggers association of the separate TatA complex to form the active translocon.</text>
</comment>
<comment type="subcellular location">
    <subcellularLocation>
        <location evidence="1">Cell inner membrane</location>
        <topology evidence="1">Single-pass membrane protein</topology>
    </subcellularLocation>
</comment>
<comment type="similarity">
    <text evidence="1">Belongs to the TatB family.</text>
</comment>
<sequence>MLDVGMTELLCFAIIAILVLGPEKLPEAARFAGRWYVRLKRYITNLQNEIDQELRLSEFRKEMQEELNRIEALERKVQQQLDEIQKQQVSESLEVTETAKTTQKPIWKCTPISGHYKVPYLTKVTSLAAQTDISETSPVELKIAV</sequence>
<keyword id="KW-0997">Cell inner membrane</keyword>
<keyword id="KW-1003">Cell membrane</keyword>
<keyword id="KW-0472">Membrane</keyword>
<keyword id="KW-0653">Protein transport</keyword>
<keyword id="KW-0811">Translocation</keyword>
<keyword id="KW-0812">Transmembrane</keyword>
<keyword id="KW-1133">Transmembrane helix</keyword>
<keyword id="KW-0813">Transport</keyword>
<dbReference type="EMBL" id="CP000521">
    <property type="protein sequence ID" value="ABO10920.1"/>
    <property type="molecule type" value="Genomic_DNA"/>
</dbReference>
<dbReference type="RefSeq" id="WP_000887754.1">
    <property type="nucleotide sequence ID" value="NZ_CACVBA010000001.1"/>
</dbReference>
<dbReference type="SMR" id="A3M1X6"/>
<dbReference type="KEGG" id="acb:A1S_0465"/>
<dbReference type="HOGENOM" id="CLU_086034_1_2_6"/>
<dbReference type="GO" id="GO:0033281">
    <property type="term" value="C:TAT protein transport complex"/>
    <property type="evidence" value="ECO:0007669"/>
    <property type="project" value="UniProtKB-UniRule"/>
</dbReference>
<dbReference type="GO" id="GO:0008320">
    <property type="term" value="F:protein transmembrane transporter activity"/>
    <property type="evidence" value="ECO:0007669"/>
    <property type="project" value="UniProtKB-UniRule"/>
</dbReference>
<dbReference type="GO" id="GO:0043953">
    <property type="term" value="P:protein transport by the Tat complex"/>
    <property type="evidence" value="ECO:0007669"/>
    <property type="project" value="UniProtKB-UniRule"/>
</dbReference>
<dbReference type="Gene3D" id="1.20.5.3310">
    <property type="match status" value="1"/>
</dbReference>
<dbReference type="HAMAP" id="MF_00237">
    <property type="entry name" value="TatB"/>
    <property type="match status" value="1"/>
</dbReference>
<dbReference type="InterPro" id="IPR003369">
    <property type="entry name" value="TatA/B/E"/>
</dbReference>
<dbReference type="InterPro" id="IPR018448">
    <property type="entry name" value="TatB"/>
</dbReference>
<dbReference type="NCBIfam" id="TIGR01410">
    <property type="entry name" value="tatB"/>
    <property type="match status" value="1"/>
</dbReference>
<dbReference type="PANTHER" id="PTHR33162">
    <property type="entry name" value="SEC-INDEPENDENT PROTEIN TRANSLOCASE PROTEIN TATA, CHLOROPLASTIC"/>
    <property type="match status" value="1"/>
</dbReference>
<dbReference type="PANTHER" id="PTHR33162:SF1">
    <property type="entry name" value="SEC-INDEPENDENT PROTEIN TRANSLOCASE PROTEIN TATA, CHLOROPLASTIC"/>
    <property type="match status" value="1"/>
</dbReference>
<dbReference type="Pfam" id="PF02416">
    <property type="entry name" value="TatA_B_E"/>
    <property type="match status" value="1"/>
</dbReference>
<dbReference type="PRINTS" id="PR01506">
    <property type="entry name" value="TATBPROTEIN"/>
</dbReference>
<organism>
    <name type="scientific">Acinetobacter baumannii (strain ATCC 17978 / DSM 105126 / CIP 53.77 / LMG 1025 / NCDC KC755 / 5377)</name>
    <dbReference type="NCBI Taxonomy" id="400667"/>
    <lineage>
        <taxon>Bacteria</taxon>
        <taxon>Pseudomonadati</taxon>
        <taxon>Pseudomonadota</taxon>
        <taxon>Gammaproteobacteria</taxon>
        <taxon>Moraxellales</taxon>
        <taxon>Moraxellaceae</taxon>
        <taxon>Acinetobacter</taxon>
        <taxon>Acinetobacter calcoaceticus/baumannii complex</taxon>
    </lineage>
</organism>
<evidence type="ECO:0000255" key="1">
    <source>
        <dbReference type="HAMAP-Rule" id="MF_00237"/>
    </source>
</evidence>
<name>TATB_ACIBT</name>
<gene>
    <name evidence="1" type="primary">tatB</name>
    <name type="ordered locus">A1S_0465</name>
</gene>
<protein>
    <recommendedName>
        <fullName evidence="1">Sec-independent protein translocase protein TatB</fullName>
    </recommendedName>
</protein>
<feature type="chain" id="PRO_0000301134" description="Sec-independent protein translocase protein TatB">
    <location>
        <begin position="1"/>
        <end position="145"/>
    </location>
</feature>
<feature type="transmembrane region" description="Helical" evidence="1">
    <location>
        <begin position="1"/>
        <end position="21"/>
    </location>
</feature>
<proteinExistence type="inferred from homology"/>